<keyword id="KW-0997">Cell inner membrane</keyword>
<keyword id="KW-1003">Cell membrane</keyword>
<keyword id="KW-0460">Magnesium</keyword>
<keyword id="KW-0472">Membrane</keyword>
<keyword id="KW-0808">Transferase</keyword>
<keyword id="KW-0812">Transmembrane</keyword>
<keyword id="KW-1133">Transmembrane helix</keyword>
<keyword id="KW-0831">Ubiquinone biosynthesis</keyword>
<evidence type="ECO:0000255" key="1">
    <source>
        <dbReference type="HAMAP-Rule" id="MF_01635"/>
    </source>
</evidence>
<feature type="chain" id="PRO_1000186688" description="4-hydroxybenzoate octaprenyltransferase">
    <location>
        <begin position="1"/>
        <end position="290"/>
    </location>
</feature>
<feature type="transmembrane region" description="Helical" evidence="1">
    <location>
        <begin position="23"/>
        <end position="43"/>
    </location>
</feature>
<feature type="transmembrane region" description="Helical" evidence="1">
    <location>
        <begin position="46"/>
        <end position="66"/>
    </location>
</feature>
<feature type="transmembrane region" description="Helical" evidence="1">
    <location>
        <begin position="99"/>
        <end position="119"/>
    </location>
</feature>
<feature type="transmembrane region" description="Helical" evidence="1">
    <location>
        <begin position="141"/>
        <end position="161"/>
    </location>
</feature>
<feature type="transmembrane region" description="Helical" evidence="1">
    <location>
        <begin position="163"/>
        <end position="183"/>
    </location>
</feature>
<feature type="transmembrane region" description="Helical" evidence="1">
    <location>
        <begin position="212"/>
        <end position="232"/>
    </location>
</feature>
<feature type="transmembrane region" description="Helical" evidence="1">
    <location>
        <begin position="233"/>
        <end position="253"/>
    </location>
</feature>
<feature type="transmembrane region" description="Helical" evidence="1">
    <location>
        <begin position="268"/>
        <end position="288"/>
    </location>
</feature>
<name>UBIA_SALPK</name>
<sequence length="290" mass="32602">MEWSLTQSKLLAFHRLMRTDKPIGALLLLWPTLWALWVATPGMPQLWILAVFVAGVWLMRAAGCVVNDYADRKFDGHVKRTVNRPLPSGAVTEKEARNLFVVLVLLAFLLVLTLNAMTILLSVAALALAWVYPFMKRYTHLPQVVLGAAFGWSIPMAFAAVSESLPLSCWLMFLANILWAVAYDTQYAMVDRDDDIKIGIKSTAILFGRYDTLIIGILQLGVMALMALIGWLNGLGWGYYWAVLVAGALFVYQQKLIANREREACFKAFMNNNYVGLVLFLGLAMSYWHF</sequence>
<organism>
    <name type="scientific">Salmonella paratyphi A (strain AKU_12601)</name>
    <dbReference type="NCBI Taxonomy" id="554290"/>
    <lineage>
        <taxon>Bacteria</taxon>
        <taxon>Pseudomonadati</taxon>
        <taxon>Pseudomonadota</taxon>
        <taxon>Gammaproteobacteria</taxon>
        <taxon>Enterobacterales</taxon>
        <taxon>Enterobacteriaceae</taxon>
        <taxon>Salmonella</taxon>
    </lineage>
</organism>
<gene>
    <name evidence="1" type="primary">ubiA</name>
    <name type="ordered locus">SSPA3760</name>
</gene>
<proteinExistence type="inferred from homology"/>
<comment type="function">
    <text evidence="1">Catalyzes the prenylation of para-hydroxybenzoate (PHB) with an all-trans polyprenyl group. Mediates the second step in the final reaction sequence of ubiquinone-8 (UQ-8) biosynthesis, which is the condensation of the polyisoprenoid side chain with PHB, generating the first membrane-bound Q intermediate 3-octaprenyl-4-hydroxybenzoate.</text>
</comment>
<comment type="catalytic activity">
    <reaction evidence="1">
        <text>all-trans-octaprenyl diphosphate + 4-hydroxybenzoate = 4-hydroxy-3-(all-trans-octaprenyl)benzoate + diphosphate</text>
        <dbReference type="Rhea" id="RHEA:27782"/>
        <dbReference type="ChEBI" id="CHEBI:1617"/>
        <dbReference type="ChEBI" id="CHEBI:17879"/>
        <dbReference type="ChEBI" id="CHEBI:33019"/>
        <dbReference type="ChEBI" id="CHEBI:57711"/>
        <dbReference type="EC" id="2.5.1.39"/>
    </reaction>
</comment>
<comment type="cofactor">
    <cofactor evidence="1">
        <name>Mg(2+)</name>
        <dbReference type="ChEBI" id="CHEBI:18420"/>
    </cofactor>
</comment>
<comment type="pathway">
    <text evidence="1">Cofactor biosynthesis; ubiquinone biosynthesis.</text>
</comment>
<comment type="subcellular location">
    <subcellularLocation>
        <location evidence="1">Cell inner membrane</location>
        <topology evidence="1">Multi-pass membrane protein</topology>
    </subcellularLocation>
</comment>
<comment type="similarity">
    <text evidence="1">Belongs to the UbiA prenyltransferase family.</text>
</comment>
<reference key="1">
    <citation type="journal article" date="2009" name="BMC Genomics">
        <title>Pseudogene accumulation in the evolutionary histories of Salmonella enterica serovars Paratyphi A and Typhi.</title>
        <authorList>
            <person name="Holt K.E."/>
            <person name="Thomson N.R."/>
            <person name="Wain J."/>
            <person name="Langridge G.C."/>
            <person name="Hasan R."/>
            <person name="Bhutta Z.A."/>
            <person name="Quail M.A."/>
            <person name="Norbertczak H."/>
            <person name="Walker D."/>
            <person name="Simmonds M."/>
            <person name="White B."/>
            <person name="Bason N."/>
            <person name="Mungall K."/>
            <person name="Dougan G."/>
            <person name="Parkhill J."/>
        </authorList>
    </citation>
    <scope>NUCLEOTIDE SEQUENCE [LARGE SCALE GENOMIC DNA]</scope>
    <source>
        <strain>AKU_12601</strain>
    </source>
</reference>
<accession>B5BJV7</accession>
<dbReference type="EC" id="2.5.1.39" evidence="1"/>
<dbReference type="EMBL" id="FM200053">
    <property type="protein sequence ID" value="CAR62044.1"/>
    <property type="molecule type" value="Genomic_DNA"/>
</dbReference>
<dbReference type="RefSeq" id="WP_000455249.1">
    <property type="nucleotide sequence ID" value="NC_011147.1"/>
</dbReference>
<dbReference type="SMR" id="B5BJV7"/>
<dbReference type="KEGG" id="sek:SSPA3760"/>
<dbReference type="HOGENOM" id="CLU_034879_1_0_6"/>
<dbReference type="UniPathway" id="UPA00232"/>
<dbReference type="Proteomes" id="UP000001869">
    <property type="component" value="Chromosome"/>
</dbReference>
<dbReference type="GO" id="GO:0005886">
    <property type="term" value="C:plasma membrane"/>
    <property type="evidence" value="ECO:0007669"/>
    <property type="project" value="UniProtKB-SubCell"/>
</dbReference>
<dbReference type="GO" id="GO:0008412">
    <property type="term" value="F:4-hydroxybenzoate polyprenyltransferase activity"/>
    <property type="evidence" value="ECO:0007669"/>
    <property type="project" value="UniProtKB-UniRule"/>
</dbReference>
<dbReference type="GO" id="GO:0006744">
    <property type="term" value="P:ubiquinone biosynthetic process"/>
    <property type="evidence" value="ECO:0007669"/>
    <property type="project" value="UniProtKB-UniRule"/>
</dbReference>
<dbReference type="CDD" id="cd13959">
    <property type="entry name" value="PT_UbiA_COQ2"/>
    <property type="match status" value="1"/>
</dbReference>
<dbReference type="FunFam" id="1.10.357.140:FF:000002">
    <property type="entry name" value="4-hydroxybenzoate octaprenyltransferase"/>
    <property type="match status" value="1"/>
</dbReference>
<dbReference type="FunFam" id="1.20.120.1780:FF:000001">
    <property type="entry name" value="4-hydroxybenzoate octaprenyltransferase"/>
    <property type="match status" value="1"/>
</dbReference>
<dbReference type="Gene3D" id="1.10.357.140">
    <property type="entry name" value="UbiA prenyltransferase"/>
    <property type="match status" value="1"/>
</dbReference>
<dbReference type="Gene3D" id="1.20.120.1780">
    <property type="entry name" value="UbiA prenyltransferase"/>
    <property type="match status" value="1"/>
</dbReference>
<dbReference type="HAMAP" id="MF_01635">
    <property type="entry name" value="UbiA"/>
    <property type="match status" value="1"/>
</dbReference>
<dbReference type="InterPro" id="IPR006370">
    <property type="entry name" value="HB_polyprenyltransferase-like"/>
</dbReference>
<dbReference type="InterPro" id="IPR039653">
    <property type="entry name" value="Prenyltransferase"/>
</dbReference>
<dbReference type="InterPro" id="IPR000537">
    <property type="entry name" value="UbiA_prenyltransferase"/>
</dbReference>
<dbReference type="InterPro" id="IPR030470">
    <property type="entry name" value="UbiA_prenylTrfase_CS"/>
</dbReference>
<dbReference type="InterPro" id="IPR044878">
    <property type="entry name" value="UbiA_sf"/>
</dbReference>
<dbReference type="NCBIfam" id="TIGR01474">
    <property type="entry name" value="ubiA_proteo"/>
    <property type="match status" value="1"/>
</dbReference>
<dbReference type="PANTHER" id="PTHR11048:SF28">
    <property type="entry name" value="4-HYDROXYBENZOATE POLYPRENYLTRANSFERASE, MITOCHONDRIAL"/>
    <property type="match status" value="1"/>
</dbReference>
<dbReference type="PANTHER" id="PTHR11048">
    <property type="entry name" value="PRENYLTRANSFERASES"/>
    <property type="match status" value="1"/>
</dbReference>
<dbReference type="Pfam" id="PF01040">
    <property type="entry name" value="UbiA"/>
    <property type="match status" value="1"/>
</dbReference>
<dbReference type="PROSITE" id="PS00943">
    <property type="entry name" value="UBIA"/>
    <property type="match status" value="1"/>
</dbReference>
<protein>
    <recommendedName>
        <fullName evidence="1">4-hydroxybenzoate octaprenyltransferase</fullName>
        <ecNumber evidence="1">2.5.1.39</ecNumber>
    </recommendedName>
    <alternativeName>
        <fullName evidence="1">4-HB polyprenyltransferase</fullName>
    </alternativeName>
</protein>